<evidence type="ECO:0000255" key="1">
    <source>
        <dbReference type="HAMAP-Rule" id="MF_01382"/>
    </source>
</evidence>
<protein>
    <recommendedName>
        <fullName evidence="1">Protein translocase subunit SecA</fullName>
        <ecNumber evidence="1">7.4.2.8</ecNumber>
    </recommendedName>
</protein>
<organism>
    <name type="scientific">Ralstonia nicotianae (strain ATCC BAA-1114 / GMI1000)</name>
    <name type="common">Ralstonia solanacearum</name>
    <dbReference type="NCBI Taxonomy" id="267608"/>
    <lineage>
        <taxon>Bacteria</taxon>
        <taxon>Pseudomonadati</taxon>
        <taxon>Pseudomonadota</taxon>
        <taxon>Betaproteobacteria</taxon>
        <taxon>Burkholderiales</taxon>
        <taxon>Burkholderiaceae</taxon>
        <taxon>Ralstonia</taxon>
        <taxon>Ralstonia solanacearum species complex</taxon>
    </lineage>
</organism>
<keyword id="KW-0067">ATP-binding</keyword>
<keyword id="KW-0997">Cell inner membrane</keyword>
<keyword id="KW-1003">Cell membrane</keyword>
<keyword id="KW-0963">Cytoplasm</keyword>
<keyword id="KW-0472">Membrane</keyword>
<keyword id="KW-0479">Metal-binding</keyword>
<keyword id="KW-0547">Nucleotide-binding</keyword>
<keyword id="KW-0653">Protein transport</keyword>
<keyword id="KW-1185">Reference proteome</keyword>
<keyword id="KW-1278">Translocase</keyword>
<keyword id="KW-0811">Translocation</keyword>
<keyword id="KW-0813">Transport</keyword>
<keyword id="KW-0862">Zinc</keyword>
<dbReference type="EC" id="7.4.2.8" evidence="1"/>
<dbReference type="EMBL" id="AL646052">
    <property type="protein sequence ID" value="CAD16541.1"/>
    <property type="molecule type" value="Genomic_DNA"/>
</dbReference>
<dbReference type="RefSeq" id="WP_011002740.1">
    <property type="nucleotide sequence ID" value="NC_003295.1"/>
</dbReference>
<dbReference type="SMR" id="Q8XVJ6"/>
<dbReference type="STRING" id="267608.RSc2834"/>
<dbReference type="EnsemblBacteria" id="CAD16541">
    <property type="protein sequence ID" value="CAD16541"/>
    <property type="gene ID" value="RSc2834"/>
</dbReference>
<dbReference type="KEGG" id="rso:RSc2834"/>
<dbReference type="eggNOG" id="COG0653">
    <property type="taxonomic scope" value="Bacteria"/>
</dbReference>
<dbReference type="HOGENOM" id="CLU_005314_3_0_4"/>
<dbReference type="Proteomes" id="UP000001436">
    <property type="component" value="Chromosome"/>
</dbReference>
<dbReference type="GO" id="GO:0031522">
    <property type="term" value="C:cell envelope Sec protein transport complex"/>
    <property type="evidence" value="ECO:0007669"/>
    <property type="project" value="TreeGrafter"/>
</dbReference>
<dbReference type="GO" id="GO:0005829">
    <property type="term" value="C:cytosol"/>
    <property type="evidence" value="ECO:0007669"/>
    <property type="project" value="TreeGrafter"/>
</dbReference>
<dbReference type="GO" id="GO:0005886">
    <property type="term" value="C:plasma membrane"/>
    <property type="evidence" value="ECO:0007669"/>
    <property type="project" value="UniProtKB-SubCell"/>
</dbReference>
<dbReference type="GO" id="GO:0005524">
    <property type="term" value="F:ATP binding"/>
    <property type="evidence" value="ECO:0007669"/>
    <property type="project" value="UniProtKB-UniRule"/>
</dbReference>
<dbReference type="GO" id="GO:0046872">
    <property type="term" value="F:metal ion binding"/>
    <property type="evidence" value="ECO:0007669"/>
    <property type="project" value="UniProtKB-KW"/>
</dbReference>
<dbReference type="GO" id="GO:0008564">
    <property type="term" value="F:protein-exporting ATPase activity"/>
    <property type="evidence" value="ECO:0007669"/>
    <property type="project" value="UniProtKB-EC"/>
</dbReference>
<dbReference type="GO" id="GO:0065002">
    <property type="term" value="P:intracellular protein transmembrane transport"/>
    <property type="evidence" value="ECO:0007669"/>
    <property type="project" value="UniProtKB-UniRule"/>
</dbReference>
<dbReference type="GO" id="GO:0017038">
    <property type="term" value="P:protein import"/>
    <property type="evidence" value="ECO:0007669"/>
    <property type="project" value="InterPro"/>
</dbReference>
<dbReference type="GO" id="GO:0006605">
    <property type="term" value="P:protein targeting"/>
    <property type="evidence" value="ECO:0007669"/>
    <property type="project" value="UniProtKB-UniRule"/>
</dbReference>
<dbReference type="GO" id="GO:0043952">
    <property type="term" value="P:protein transport by the Sec complex"/>
    <property type="evidence" value="ECO:0007669"/>
    <property type="project" value="TreeGrafter"/>
</dbReference>
<dbReference type="CDD" id="cd17928">
    <property type="entry name" value="DEXDc_SecA"/>
    <property type="match status" value="1"/>
</dbReference>
<dbReference type="CDD" id="cd18803">
    <property type="entry name" value="SF2_C_secA"/>
    <property type="match status" value="1"/>
</dbReference>
<dbReference type="FunFam" id="3.40.50.300:FF:000081">
    <property type="entry name" value="Preprotein translocase subunit SecA"/>
    <property type="match status" value="1"/>
</dbReference>
<dbReference type="FunFam" id="3.40.50.300:FF:000113">
    <property type="entry name" value="Preprotein translocase subunit SecA"/>
    <property type="match status" value="1"/>
</dbReference>
<dbReference type="FunFam" id="3.90.1440.10:FF:000001">
    <property type="entry name" value="Preprotein translocase subunit SecA"/>
    <property type="match status" value="1"/>
</dbReference>
<dbReference type="FunFam" id="1.10.3060.10:FF:000003">
    <property type="entry name" value="Protein translocase subunit SecA"/>
    <property type="match status" value="1"/>
</dbReference>
<dbReference type="Gene3D" id="1.10.3060.10">
    <property type="entry name" value="Helical scaffold and wing domains of SecA"/>
    <property type="match status" value="1"/>
</dbReference>
<dbReference type="Gene3D" id="3.40.50.300">
    <property type="entry name" value="P-loop containing nucleotide triphosphate hydrolases"/>
    <property type="match status" value="2"/>
</dbReference>
<dbReference type="Gene3D" id="3.90.1440.10">
    <property type="entry name" value="SecA, preprotein cross-linking domain"/>
    <property type="match status" value="1"/>
</dbReference>
<dbReference type="HAMAP" id="MF_01382">
    <property type="entry name" value="SecA"/>
    <property type="match status" value="1"/>
</dbReference>
<dbReference type="InterPro" id="IPR014001">
    <property type="entry name" value="Helicase_ATP-bd"/>
</dbReference>
<dbReference type="InterPro" id="IPR001650">
    <property type="entry name" value="Helicase_C-like"/>
</dbReference>
<dbReference type="InterPro" id="IPR027417">
    <property type="entry name" value="P-loop_NTPase"/>
</dbReference>
<dbReference type="InterPro" id="IPR004027">
    <property type="entry name" value="SEC_C_motif"/>
</dbReference>
<dbReference type="InterPro" id="IPR000185">
    <property type="entry name" value="SecA"/>
</dbReference>
<dbReference type="InterPro" id="IPR020937">
    <property type="entry name" value="SecA_CS"/>
</dbReference>
<dbReference type="InterPro" id="IPR011115">
    <property type="entry name" value="SecA_DEAD"/>
</dbReference>
<dbReference type="InterPro" id="IPR014018">
    <property type="entry name" value="SecA_motor_DEAD"/>
</dbReference>
<dbReference type="InterPro" id="IPR011130">
    <property type="entry name" value="SecA_preprotein_X-link_dom"/>
</dbReference>
<dbReference type="InterPro" id="IPR044722">
    <property type="entry name" value="SecA_SF2_C"/>
</dbReference>
<dbReference type="InterPro" id="IPR011116">
    <property type="entry name" value="SecA_Wing/Scaffold"/>
</dbReference>
<dbReference type="InterPro" id="IPR036266">
    <property type="entry name" value="SecA_Wing/Scaffold_sf"/>
</dbReference>
<dbReference type="InterPro" id="IPR036670">
    <property type="entry name" value="SecA_X-link_sf"/>
</dbReference>
<dbReference type="NCBIfam" id="NF009538">
    <property type="entry name" value="PRK12904.1"/>
    <property type="match status" value="1"/>
</dbReference>
<dbReference type="NCBIfam" id="TIGR00963">
    <property type="entry name" value="secA"/>
    <property type="match status" value="1"/>
</dbReference>
<dbReference type="PANTHER" id="PTHR30612:SF0">
    <property type="entry name" value="CHLOROPLAST PROTEIN-TRANSPORTING ATPASE"/>
    <property type="match status" value="1"/>
</dbReference>
<dbReference type="PANTHER" id="PTHR30612">
    <property type="entry name" value="SECA INNER MEMBRANE COMPONENT OF SEC PROTEIN SECRETION SYSTEM"/>
    <property type="match status" value="1"/>
</dbReference>
<dbReference type="Pfam" id="PF21090">
    <property type="entry name" value="P-loop_SecA"/>
    <property type="match status" value="1"/>
</dbReference>
<dbReference type="Pfam" id="PF02810">
    <property type="entry name" value="SEC-C"/>
    <property type="match status" value="1"/>
</dbReference>
<dbReference type="Pfam" id="PF07517">
    <property type="entry name" value="SecA_DEAD"/>
    <property type="match status" value="1"/>
</dbReference>
<dbReference type="Pfam" id="PF01043">
    <property type="entry name" value="SecA_PP_bind"/>
    <property type="match status" value="1"/>
</dbReference>
<dbReference type="Pfam" id="PF07516">
    <property type="entry name" value="SecA_SW"/>
    <property type="match status" value="1"/>
</dbReference>
<dbReference type="PRINTS" id="PR00906">
    <property type="entry name" value="SECA"/>
</dbReference>
<dbReference type="SMART" id="SM00957">
    <property type="entry name" value="SecA_DEAD"/>
    <property type="match status" value="1"/>
</dbReference>
<dbReference type="SMART" id="SM00958">
    <property type="entry name" value="SecA_PP_bind"/>
    <property type="match status" value="1"/>
</dbReference>
<dbReference type="SUPFAM" id="SSF81886">
    <property type="entry name" value="Helical scaffold and wing domains of SecA"/>
    <property type="match status" value="1"/>
</dbReference>
<dbReference type="SUPFAM" id="SSF52540">
    <property type="entry name" value="P-loop containing nucleoside triphosphate hydrolases"/>
    <property type="match status" value="2"/>
</dbReference>
<dbReference type="SUPFAM" id="SSF81767">
    <property type="entry name" value="Pre-protein crosslinking domain of SecA"/>
    <property type="match status" value="1"/>
</dbReference>
<dbReference type="PROSITE" id="PS01312">
    <property type="entry name" value="SECA"/>
    <property type="match status" value="1"/>
</dbReference>
<dbReference type="PROSITE" id="PS51196">
    <property type="entry name" value="SECA_MOTOR_DEAD"/>
    <property type="match status" value="1"/>
</dbReference>
<proteinExistence type="inferred from homology"/>
<comment type="function">
    <text evidence="1">Part of the Sec protein translocase complex. Interacts with the SecYEG preprotein conducting channel. Has a central role in coupling the hydrolysis of ATP to the transfer of proteins into and across the cell membrane, serving both as a receptor for the preprotein-SecB complex and as an ATP-driven molecular motor driving the stepwise translocation of polypeptide chains across the membrane.</text>
</comment>
<comment type="catalytic activity">
    <reaction evidence="1">
        <text>ATP + H2O + cellular proteinSide 1 = ADP + phosphate + cellular proteinSide 2.</text>
        <dbReference type="EC" id="7.4.2.8"/>
    </reaction>
</comment>
<comment type="cofactor">
    <cofactor evidence="1">
        <name>Zn(2+)</name>
        <dbReference type="ChEBI" id="CHEBI:29105"/>
    </cofactor>
    <text evidence="1">May bind 1 zinc ion per subunit.</text>
</comment>
<comment type="subunit">
    <text evidence="1">Monomer and homodimer. Part of the essential Sec protein translocation apparatus which comprises SecA, SecYEG and auxiliary proteins SecDF-YajC and YidC.</text>
</comment>
<comment type="subcellular location">
    <subcellularLocation>
        <location evidence="1">Cell inner membrane</location>
        <topology evidence="1">Peripheral membrane protein</topology>
        <orientation evidence="1">Cytoplasmic side</orientation>
    </subcellularLocation>
    <subcellularLocation>
        <location evidence="1">Cytoplasm</location>
    </subcellularLocation>
    <text evidence="1">Distribution is 50-50.</text>
</comment>
<comment type="similarity">
    <text evidence="1">Belongs to the SecA family.</text>
</comment>
<feature type="chain" id="PRO_0000320913" description="Protein translocase subunit SecA">
    <location>
        <begin position="1"/>
        <end position="934"/>
    </location>
</feature>
<feature type="binding site" evidence="1">
    <location>
        <position position="87"/>
    </location>
    <ligand>
        <name>ATP</name>
        <dbReference type="ChEBI" id="CHEBI:30616"/>
    </ligand>
</feature>
<feature type="binding site" evidence="1">
    <location>
        <begin position="105"/>
        <end position="109"/>
    </location>
    <ligand>
        <name>ATP</name>
        <dbReference type="ChEBI" id="CHEBI:30616"/>
    </ligand>
</feature>
<feature type="binding site" evidence="1">
    <location>
        <position position="515"/>
    </location>
    <ligand>
        <name>ATP</name>
        <dbReference type="ChEBI" id="CHEBI:30616"/>
    </ligand>
</feature>
<feature type="binding site" evidence="1">
    <location>
        <position position="918"/>
    </location>
    <ligand>
        <name>Zn(2+)</name>
        <dbReference type="ChEBI" id="CHEBI:29105"/>
    </ligand>
</feature>
<feature type="binding site" evidence="1">
    <location>
        <position position="920"/>
    </location>
    <ligand>
        <name>Zn(2+)</name>
        <dbReference type="ChEBI" id="CHEBI:29105"/>
    </ligand>
</feature>
<feature type="binding site" evidence="1">
    <location>
        <position position="929"/>
    </location>
    <ligand>
        <name>Zn(2+)</name>
        <dbReference type="ChEBI" id="CHEBI:29105"/>
    </ligand>
</feature>
<feature type="binding site" evidence="1">
    <location>
        <position position="930"/>
    </location>
    <ligand>
        <name>Zn(2+)</name>
        <dbReference type="ChEBI" id="CHEBI:29105"/>
    </ligand>
</feature>
<name>SECA_RALN1</name>
<reference key="1">
    <citation type="journal article" date="2002" name="Nature">
        <title>Genome sequence of the plant pathogen Ralstonia solanacearum.</title>
        <authorList>
            <person name="Salanoubat M."/>
            <person name="Genin S."/>
            <person name="Artiguenave F."/>
            <person name="Gouzy J."/>
            <person name="Mangenot S."/>
            <person name="Arlat M."/>
            <person name="Billault A."/>
            <person name="Brottier P."/>
            <person name="Camus J.-C."/>
            <person name="Cattolico L."/>
            <person name="Chandler M."/>
            <person name="Choisne N."/>
            <person name="Claudel-Renard C."/>
            <person name="Cunnac S."/>
            <person name="Demange N."/>
            <person name="Gaspin C."/>
            <person name="Lavie M."/>
            <person name="Moisan A."/>
            <person name="Robert C."/>
            <person name="Saurin W."/>
            <person name="Schiex T."/>
            <person name="Siguier P."/>
            <person name="Thebault P."/>
            <person name="Whalen M."/>
            <person name="Wincker P."/>
            <person name="Levy M."/>
            <person name="Weissenbach J."/>
            <person name="Boucher C.A."/>
        </authorList>
    </citation>
    <scope>NUCLEOTIDE SEQUENCE [LARGE SCALE GENOMIC DNA]</scope>
    <source>
        <strain>ATCC BAA-1114 / GMI1000</strain>
    </source>
</reference>
<sequence length="934" mass="105242">MITGLLKKIFGSRNERLIKQYRRKVVQINALEPTFEALSDAELQAKTQAFRERFAKGETLDALLPEAFAVCREASKRVMKMRHFDVQLIGGMVLHDGKIAEMRTGEGKTLTATLAVYLNAIAGLGVHVVTVNDYLAQRDAEWMGKLYNWLGLSVGVNLTTMAHDEKQAAYAADITYGTNNEFGFDYLRDNMVYDDSQRVQRPLNYAIVDEVDSILIDEARTPLIISGQAEDHTDLYRRMNSIPPLLTRQIGEEKADGTGVEKPGDYYVDEKSHQVYLTEAGHEKAEQILLQAGLLAEGESLYAPQNITLMHHLYASLRAHSLFHRDQHYVVQGDEVIIVDEFTGRLMQGRRWSDGLHQAVEAKEGVQIQQENQTLATITFQNYFRMYAKLAGMTGTADTEAYEFQEIYGLETVVIPTNRQAQRKDLQDQIYKTSKERYDAVIRDIRDCFERGQPVLVGTTSIENSELLSHLLNQAQLPHQVLNAKQHAREAEIVAQAGRPKMVTIATNMAGRGTDIVLGGNVEKQAGFVMADESLSDEEKARRVTQLQDEWQSLHEQVKAAGGLHIVGTERHESRRIDNQLRGRAGRQGDPGSSRFYLSLDDQLLRIFAGDRVRAIMDRLKMPEGEPIEAGIVTRSIESAQRKVEGRNFDIRKQLLQYDDVANDQRREIYKLRNEILEAVDAGDLVKNLRESVFVELFRAYVPAESMEEQWDLAGLEKTLRDDWGVEVPLVKTVEQAQSIEDEELLTQVQEAVEAVYAGKVAQVGRESFAGFERSVMLQSLDTHWREHLAALDHLRQGIHLRGYAQKDPKQEYKRESFELFGRLLDNIRNEVTRIIFTVRIQSQAELEEASEQIEEDLSQLTNVQYKHDEFSELAEVAAGDAEIHGETPPVPAHRSAAASAAAALAGQVPKVGRNDPCPCGSGKKYKQCHGKLA</sequence>
<accession>Q8XVJ6</accession>
<gene>
    <name evidence="1" type="primary">secA</name>
    <name type="ordered locus">RSc2834</name>
</gene>